<feature type="chain" id="PRO_0000378152" description="Protein arginine N-methyltransferase 6">
    <location>
        <begin position="1"/>
        <end position="340"/>
    </location>
</feature>
<feature type="domain" description="SAM-dependent MTase PRMT-type" evidence="4">
    <location>
        <begin position="15"/>
        <end position="321"/>
    </location>
</feature>
<feature type="active site" evidence="1">
    <location>
        <position position="126"/>
    </location>
</feature>
<feature type="active site" evidence="1">
    <location>
        <position position="135"/>
    </location>
</feature>
<feature type="binding site" evidence="1">
    <location>
        <position position="28"/>
    </location>
    <ligand>
        <name>S-adenosyl-L-methionine</name>
        <dbReference type="ChEBI" id="CHEBI:59789"/>
    </ligand>
</feature>
<feature type="binding site" evidence="1">
    <location>
        <position position="37"/>
    </location>
    <ligand>
        <name>S-adenosyl-L-methionine</name>
        <dbReference type="ChEBI" id="CHEBI:59789"/>
    </ligand>
</feature>
<feature type="binding site" evidence="1">
    <location>
        <position position="61"/>
    </location>
    <ligand>
        <name>S-adenosyl-L-methionine</name>
        <dbReference type="ChEBI" id="CHEBI:59789"/>
    </ligand>
</feature>
<feature type="binding site" evidence="1">
    <location>
        <position position="83"/>
    </location>
    <ligand>
        <name>S-adenosyl-L-methionine</name>
        <dbReference type="ChEBI" id="CHEBI:59789"/>
    </ligand>
</feature>
<feature type="binding site" evidence="1">
    <location>
        <position position="112"/>
    </location>
    <ligand>
        <name>S-adenosyl-L-methionine</name>
        <dbReference type="ChEBI" id="CHEBI:59789"/>
    </ligand>
</feature>
<reference key="1">
    <citation type="submission" date="2008-02" db="EMBL/GenBank/DDBJ databases">
        <authorList>
            <consortium name="NIH - Xenopus Gene Collection (XGC) project"/>
        </authorList>
    </citation>
    <scope>NUCLEOTIDE SEQUENCE [LARGE SCALE MRNA]</scope>
    <source>
        <tissue>Embryo</tissue>
    </source>
</reference>
<accession>B0JYW5</accession>
<dbReference type="EC" id="2.1.1.319" evidence="3"/>
<dbReference type="EMBL" id="BC158943">
    <property type="protein sequence ID" value="AAI58944.1"/>
    <property type="molecule type" value="mRNA"/>
</dbReference>
<dbReference type="RefSeq" id="NP_001120104.1">
    <property type="nucleotide sequence ID" value="NM_001126632.1"/>
</dbReference>
<dbReference type="SMR" id="B0JYW5"/>
<dbReference type="FunCoup" id="B0JYW5">
    <property type="interactions" value="2767"/>
</dbReference>
<dbReference type="STRING" id="8364.ENSXETP00000030349"/>
<dbReference type="PaxDb" id="8364-ENSXETP00000021902"/>
<dbReference type="GeneID" id="100145123"/>
<dbReference type="KEGG" id="xtr:100145123"/>
<dbReference type="AGR" id="Xenbase:XB-GENE-5857258"/>
<dbReference type="CTD" id="55170"/>
<dbReference type="Xenbase" id="XB-GENE-5857258">
    <property type="gene designation" value="prmt6"/>
</dbReference>
<dbReference type="eggNOG" id="KOG1499">
    <property type="taxonomic scope" value="Eukaryota"/>
</dbReference>
<dbReference type="InParanoid" id="B0JYW5"/>
<dbReference type="OMA" id="CIHVDYT"/>
<dbReference type="OrthoDB" id="7848332at2759"/>
<dbReference type="Reactome" id="R-XTR-3214858">
    <property type="pathway name" value="RMTs methylate histone arginines"/>
</dbReference>
<dbReference type="Reactome" id="R-XTR-8936459">
    <property type="pathway name" value="RUNX1 regulates genes involved in megakaryocyte differentiation and platelet function"/>
</dbReference>
<dbReference type="Proteomes" id="UP000008143">
    <property type="component" value="Chromosome 4"/>
</dbReference>
<dbReference type="GO" id="GO:0005634">
    <property type="term" value="C:nucleus"/>
    <property type="evidence" value="ECO:0000250"/>
    <property type="project" value="UniProtKB"/>
</dbReference>
<dbReference type="GO" id="GO:0042393">
    <property type="term" value="F:histone binding"/>
    <property type="evidence" value="ECO:0000250"/>
    <property type="project" value="UniProtKB"/>
</dbReference>
<dbReference type="GO" id="GO:0070612">
    <property type="term" value="F:histone H2AR3 methyltransferase activity"/>
    <property type="evidence" value="ECO:0000250"/>
    <property type="project" value="UniProtKB"/>
</dbReference>
<dbReference type="GO" id="GO:0070611">
    <property type="term" value="F:histone H3R2 methyltransferase activity"/>
    <property type="evidence" value="ECO:0000250"/>
    <property type="project" value="UniProtKB"/>
</dbReference>
<dbReference type="GO" id="GO:0044020">
    <property type="term" value="F:histone H4R3 methyltransferase activity"/>
    <property type="evidence" value="ECO:0000250"/>
    <property type="project" value="UniProtKB"/>
</dbReference>
<dbReference type="GO" id="GO:0042054">
    <property type="term" value="F:histone methyltransferase activity"/>
    <property type="evidence" value="ECO:0000250"/>
    <property type="project" value="UniProtKB"/>
</dbReference>
<dbReference type="GO" id="GO:0016274">
    <property type="term" value="F:protein-arginine N-methyltransferase activity"/>
    <property type="evidence" value="ECO:0000250"/>
    <property type="project" value="UniProtKB"/>
</dbReference>
<dbReference type="GO" id="GO:0035242">
    <property type="term" value="F:protein-arginine omega-N asymmetric methyltransferase activity"/>
    <property type="evidence" value="ECO:0000250"/>
    <property type="project" value="UniProtKB"/>
</dbReference>
<dbReference type="GO" id="GO:0035241">
    <property type="term" value="F:protein-arginine omega-N monomethyltransferase activity"/>
    <property type="evidence" value="ECO:0000250"/>
    <property type="project" value="UniProtKB"/>
</dbReference>
<dbReference type="GO" id="GO:0006281">
    <property type="term" value="P:DNA repair"/>
    <property type="evidence" value="ECO:0007669"/>
    <property type="project" value="UniProtKB-KW"/>
</dbReference>
<dbReference type="GO" id="GO:0032259">
    <property type="term" value="P:methylation"/>
    <property type="evidence" value="ECO:0007669"/>
    <property type="project" value="UniProtKB-KW"/>
</dbReference>
<dbReference type="GO" id="GO:0045892">
    <property type="term" value="P:negative regulation of DNA-templated transcription"/>
    <property type="evidence" value="ECO:0000250"/>
    <property type="project" value="UniProtKB"/>
</dbReference>
<dbReference type="GO" id="GO:2000059">
    <property type="term" value="P:negative regulation of ubiquitin-dependent protein catabolic process"/>
    <property type="evidence" value="ECO:0000250"/>
    <property type="project" value="UniProtKB"/>
</dbReference>
<dbReference type="CDD" id="cd02440">
    <property type="entry name" value="AdoMet_MTases"/>
    <property type="match status" value="1"/>
</dbReference>
<dbReference type="FunFam" id="3.40.50.150:FF:000016">
    <property type="entry name" value="Protein arginine N-methyltransferase 6"/>
    <property type="match status" value="1"/>
</dbReference>
<dbReference type="FunFam" id="2.70.160.11:FF:000009">
    <property type="entry name" value="protein arginine N-methyltransferase 6"/>
    <property type="match status" value="1"/>
</dbReference>
<dbReference type="Gene3D" id="2.70.160.11">
    <property type="entry name" value="Hnrnp arginine n-methyltransferase1"/>
    <property type="match status" value="1"/>
</dbReference>
<dbReference type="Gene3D" id="3.40.50.150">
    <property type="entry name" value="Vaccinia Virus protein VP39"/>
    <property type="match status" value="1"/>
</dbReference>
<dbReference type="InterPro" id="IPR025799">
    <property type="entry name" value="Arg_MeTrfase"/>
</dbReference>
<dbReference type="InterPro" id="IPR055135">
    <property type="entry name" value="PRMT_dom"/>
</dbReference>
<dbReference type="InterPro" id="IPR029063">
    <property type="entry name" value="SAM-dependent_MTases_sf"/>
</dbReference>
<dbReference type="PANTHER" id="PTHR11006">
    <property type="entry name" value="PROTEIN ARGININE N-METHYLTRANSFERASE"/>
    <property type="match status" value="1"/>
</dbReference>
<dbReference type="PANTHER" id="PTHR11006:SF73">
    <property type="entry name" value="PROTEIN ARGININE N-METHYLTRANSFERASE 6"/>
    <property type="match status" value="1"/>
</dbReference>
<dbReference type="Pfam" id="PF06325">
    <property type="entry name" value="PrmA"/>
    <property type="match status" value="1"/>
</dbReference>
<dbReference type="Pfam" id="PF22528">
    <property type="entry name" value="PRMT_C"/>
    <property type="match status" value="1"/>
</dbReference>
<dbReference type="SUPFAM" id="SSF53335">
    <property type="entry name" value="S-adenosyl-L-methionine-dependent methyltransferases"/>
    <property type="match status" value="1"/>
</dbReference>
<dbReference type="PROSITE" id="PS51678">
    <property type="entry name" value="SAM_MT_PRMT"/>
    <property type="match status" value="1"/>
</dbReference>
<organism>
    <name type="scientific">Xenopus tropicalis</name>
    <name type="common">Western clawed frog</name>
    <name type="synonym">Silurana tropicalis</name>
    <dbReference type="NCBI Taxonomy" id="8364"/>
    <lineage>
        <taxon>Eukaryota</taxon>
        <taxon>Metazoa</taxon>
        <taxon>Chordata</taxon>
        <taxon>Craniata</taxon>
        <taxon>Vertebrata</taxon>
        <taxon>Euteleostomi</taxon>
        <taxon>Amphibia</taxon>
        <taxon>Batrachia</taxon>
        <taxon>Anura</taxon>
        <taxon>Pipoidea</taxon>
        <taxon>Pipidae</taxon>
        <taxon>Xenopodinae</taxon>
        <taxon>Xenopus</taxon>
        <taxon>Silurana</taxon>
    </lineage>
</organism>
<name>ANM6_XENTR</name>
<evidence type="ECO:0000250" key="1"/>
<evidence type="ECO:0000250" key="2">
    <source>
        <dbReference type="UniProtKB" id="Q6NZB1"/>
    </source>
</evidence>
<evidence type="ECO:0000250" key="3">
    <source>
        <dbReference type="UniProtKB" id="Q96LA8"/>
    </source>
</evidence>
<evidence type="ECO:0000255" key="4">
    <source>
        <dbReference type="PROSITE-ProRule" id="PRU01015"/>
    </source>
</evidence>
<comment type="function">
    <text evidence="2">Arginine methyltransferase that can catalyze the formation of both omega-N monomethylarginine (MMA) and asymmetrical dimethylarginine (aDMA), with a strong preference for the formation of aDMA. Preferentially methylates arginyl residues present in a glycine and arginine-rich domain and displays preference for monomethylated substrates. Specifically mediates the asymmetric dimethylation of histone H3 'Arg-2' to form H3R2me2a. H3R2me2a represents a specific tag for epigenetic transcriptional repression and is mutually exclusive with methylation on histone H3 'Lys-4' (H3K4me2 and H3K4me3). Acts as a transcriptional repressor of various genes such as HOXA2, THBS1 and TP53. Repression of TP53 blocks cellular senescence. Also methylates histone H2A and H4 'Arg-3' (H2AR3me and H4R3me, respectively). Acts as a regulator of DNA base excision during DNA repair by mediating the methylation of DNA polymerase beta (POLB), leading to the stimulation of its polymerase activity by enhancing DNA binding and processivity. Methylates HMGA1. Regulates alternative splicing events. Acts as a transcriptional coactivator of a number of steroid hormone receptors including ESR1, ESR2, PGR and NR3C1.</text>
</comment>
<comment type="catalytic activity">
    <reaction>
        <text>L-arginyl-[protein] + 2 S-adenosyl-L-methionine = N(omega),N(omega)-dimethyl-L-arginyl-[protein] + 2 S-adenosyl-L-homocysteine + 2 H(+)</text>
        <dbReference type="Rhea" id="RHEA:48096"/>
        <dbReference type="Rhea" id="RHEA-COMP:10532"/>
        <dbReference type="Rhea" id="RHEA-COMP:11991"/>
        <dbReference type="ChEBI" id="CHEBI:15378"/>
        <dbReference type="ChEBI" id="CHEBI:29965"/>
        <dbReference type="ChEBI" id="CHEBI:57856"/>
        <dbReference type="ChEBI" id="CHEBI:59789"/>
        <dbReference type="ChEBI" id="CHEBI:61897"/>
        <dbReference type="EC" id="2.1.1.319"/>
    </reaction>
</comment>
<comment type="subcellular location">
    <subcellularLocation>
        <location evidence="3">Nucleus</location>
    </subcellularLocation>
</comment>
<comment type="similarity">
    <text evidence="4">Belongs to the class I-like SAM-binding methyltransferase superfamily. Protein arginine N-methyltransferase family. PRMT6 subfamily.</text>
</comment>
<protein>
    <recommendedName>
        <fullName>Protein arginine N-methyltransferase 6</fullName>
        <ecNumber evidence="3">2.1.1.319</ecNumber>
    </recommendedName>
    <alternativeName>
        <fullName>Histone-arginine N-methyltransferase PRMT6</fullName>
    </alternativeName>
</protein>
<gene>
    <name type="primary">prmt6</name>
</gene>
<sequence>MAMLKKRKHERTEQDCEYFQCYSDVSVHEEMIADTVRTNAYKLALLRNHSSLQGKTVLDVGAGTGILSVFSVQAGAQAVYAVEASSMSQLACQVVKSNDMENKVKVLNSSVESAEIPEQVDAIVSEWMGYALMYESMLPSVIYARDKWLKPGGLILPSCADLFIAPVNDLIVESRLDFWSEVKGMYGVDMSCMQSFARSCIMNKEMAVNLVSPEDVLSFPVRFASLDLNVCTQEEVRNLHGSFQFSCFGSSLLHGFAVWFSVTFPGENSVTLSTSPYGEETHWKQTLLYLDEEVQVEQDTEITGDVTLSPSDINPRHLRVLLNYSIGGGLRRTKQFQMGS</sequence>
<proteinExistence type="evidence at transcript level"/>
<keyword id="KW-0156">Chromatin regulator</keyword>
<keyword id="KW-0227">DNA damage</keyword>
<keyword id="KW-0234">DNA repair</keyword>
<keyword id="KW-0488">Methylation</keyword>
<keyword id="KW-0489">Methyltransferase</keyword>
<keyword id="KW-0539">Nucleus</keyword>
<keyword id="KW-1185">Reference proteome</keyword>
<keyword id="KW-0678">Repressor</keyword>
<keyword id="KW-0949">S-adenosyl-L-methionine</keyword>
<keyword id="KW-0804">Transcription</keyword>
<keyword id="KW-0805">Transcription regulation</keyword>
<keyword id="KW-0808">Transferase</keyword>